<gene>
    <name evidence="1" type="primary">rplJ</name>
    <name type="ordered locus">BPUM_0089</name>
</gene>
<protein>
    <recommendedName>
        <fullName evidence="1">Large ribosomal subunit protein uL10</fullName>
    </recommendedName>
    <alternativeName>
        <fullName evidence="2">50S ribosomal protein L10</fullName>
    </alternativeName>
</protein>
<dbReference type="EMBL" id="CP000813">
    <property type="protein sequence ID" value="ABV60789.1"/>
    <property type="molecule type" value="Genomic_DNA"/>
</dbReference>
<dbReference type="RefSeq" id="WP_003217048.1">
    <property type="nucleotide sequence ID" value="NZ_VEIS01000020.1"/>
</dbReference>
<dbReference type="SMR" id="A8F972"/>
<dbReference type="STRING" id="315750.BPUM_0089"/>
<dbReference type="GeneID" id="5619332"/>
<dbReference type="KEGG" id="bpu:BPUM_0089"/>
<dbReference type="eggNOG" id="COG0244">
    <property type="taxonomic scope" value="Bacteria"/>
</dbReference>
<dbReference type="HOGENOM" id="CLU_092227_2_0_9"/>
<dbReference type="OrthoDB" id="9808307at2"/>
<dbReference type="Proteomes" id="UP000001355">
    <property type="component" value="Chromosome"/>
</dbReference>
<dbReference type="GO" id="GO:0015934">
    <property type="term" value="C:large ribosomal subunit"/>
    <property type="evidence" value="ECO:0007669"/>
    <property type="project" value="InterPro"/>
</dbReference>
<dbReference type="GO" id="GO:0070180">
    <property type="term" value="F:large ribosomal subunit rRNA binding"/>
    <property type="evidence" value="ECO:0007669"/>
    <property type="project" value="UniProtKB-UniRule"/>
</dbReference>
<dbReference type="GO" id="GO:0003735">
    <property type="term" value="F:structural constituent of ribosome"/>
    <property type="evidence" value="ECO:0007669"/>
    <property type="project" value="InterPro"/>
</dbReference>
<dbReference type="GO" id="GO:0006412">
    <property type="term" value="P:translation"/>
    <property type="evidence" value="ECO:0007669"/>
    <property type="project" value="UniProtKB-UniRule"/>
</dbReference>
<dbReference type="CDD" id="cd05797">
    <property type="entry name" value="Ribosomal_L10"/>
    <property type="match status" value="1"/>
</dbReference>
<dbReference type="FunFam" id="3.30.70.1730:FF:000001">
    <property type="entry name" value="50S ribosomal protein L10"/>
    <property type="match status" value="1"/>
</dbReference>
<dbReference type="Gene3D" id="3.30.70.1730">
    <property type="match status" value="1"/>
</dbReference>
<dbReference type="Gene3D" id="6.10.250.290">
    <property type="match status" value="1"/>
</dbReference>
<dbReference type="HAMAP" id="MF_00362">
    <property type="entry name" value="Ribosomal_uL10"/>
    <property type="match status" value="1"/>
</dbReference>
<dbReference type="InterPro" id="IPR001790">
    <property type="entry name" value="Ribosomal_uL10"/>
</dbReference>
<dbReference type="InterPro" id="IPR043141">
    <property type="entry name" value="Ribosomal_uL10-like_sf"/>
</dbReference>
<dbReference type="InterPro" id="IPR022973">
    <property type="entry name" value="Ribosomal_uL10_bac"/>
</dbReference>
<dbReference type="InterPro" id="IPR047865">
    <property type="entry name" value="Ribosomal_uL10_bac_type"/>
</dbReference>
<dbReference type="InterPro" id="IPR002363">
    <property type="entry name" value="Ribosomal_uL10_CS_bac"/>
</dbReference>
<dbReference type="NCBIfam" id="NF000955">
    <property type="entry name" value="PRK00099.1-1"/>
    <property type="match status" value="1"/>
</dbReference>
<dbReference type="PANTHER" id="PTHR11560">
    <property type="entry name" value="39S RIBOSOMAL PROTEIN L10, MITOCHONDRIAL"/>
    <property type="match status" value="1"/>
</dbReference>
<dbReference type="Pfam" id="PF00466">
    <property type="entry name" value="Ribosomal_L10"/>
    <property type="match status" value="1"/>
</dbReference>
<dbReference type="SUPFAM" id="SSF160369">
    <property type="entry name" value="Ribosomal protein L10-like"/>
    <property type="match status" value="1"/>
</dbReference>
<dbReference type="PROSITE" id="PS01109">
    <property type="entry name" value="RIBOSOMAL_L10"/>
    <property type="match status" value="1"/>
</dbReference>
<accession>A8F972</accession>
<feature type="chain" id="PRO_1000059885" description="Large ribosomal subunit protein uL10">
    <location>
        <begin position="1"/>
        <end position="166"/>
    </location>
</feature>
<evidence type="ECO:0000255" key="1">
    <source>
        <dbReference type="HAMAP-Rule" id="MF_00362"/>
    </source>
</evidence>
<evidence type="ECO:0000305" key="2"/>
<comment type="function">
    <text evidence="1">Forms part of the ribosomal stalk, playing a central role in the interaction of the ribosome with GTP-bound translation factors.</text>
</comment>
<comment type="subunit">
    <text evidence="1">Part of the ribosomal stalk of the 50S ribosomal subunit. The N-terminus interacts with L11 and the large rRNA to form the base of the stalk. The C-terminus forms an elongated spine to which L12 dimers bind in a sequential fashion forming a multimeric L10(L12)X complex.</text>
</comment>
<comment type="similarity">
    <text evidence="1">Belongs to the universal ribosomal protein uL10 family.</text>
</comment>
<sequence length="166" mass="18030">MSNAIDTKKVVVDEITSKFKDSMSTVIVDYRGLSVSEVTELRKQLRDAGVEFKVYKNTLTRRAVEQVELTGLNDFLTGPNAIAFSNEDVIAPAKIINEFAKSHEALEIKAGVIEGNVATVEEVKALAELPSREGLLSMLLSVLQAPVRNLALATKAVADQKEEQGA</sequence>
<name>RL10_BACP2</name>
<proteinExistence type="inferred from homology"/>
<organism>
    <name type="scientific">Bacillus pumilus (strain SAFR-032)</name>
    <dbReference type="NCBI Taxonomy" id="315750"/>
    <lineage>
        <taxon>Bacteria</taxon>
        <taxon>Bacillati</taxon>
        <taxon>Bacillota</taxon>
        <taxon>Bacilli</taxon>
        <taxon>Bacillales</taxon>
        <taxon>Bacillaceae</taxon>
        <taxon>Bacillus</taxon>
    </lineage>
</organism>
<keyword id="KW-0687">Ribonucleoprotein</keyword>
<keyword id="KW-0689">Ribosomal protein</keyword>
<keyword id="KW-0694">RNA-binding</keyword>
<keyword id="KW-0699">rRNA-binding</keyword>
<reference key="1">
    <citation type="journal article" date="2007" name="PLoS ONE">
        <title>Paradoxical DNA repair and peroxide resistance gene conservation in Bacillus pumilus SAFR-032.</title>
        <authorList>
            <person name="Gioia J."/>
            <person name="Yerrapragada S."/>
            <person name="Qin X."/>
            <person name="Jiang H."/>
            <person name="Igboeli O.C."/>
            <person name="Muzny D."/>
            <person name="Dugan-Rocha S."/>
            <person name="Ding Y."/>
            <person name="Hawes A."/>
            <person name="Liu W."/>
            <person name="Perez L."/>
            <person name="Kovar C."/>
            <person name="Dinh H."/>
            <person name="Lee S."/>
            <person name="Nazareth L."/>
            <person name="Blyth P."/>
            <person name="Holder M."/>
            <person name="Buhay C."/>
            <person name="Tirumalai M.R."/>
            <person name="Liu Y."/>
            <person name="Dasgupta I."/>
            <person name="Bokhetache L."/>
            <person name="Fujita M."/>
            <person name="Karouia F."/>
            <person name="Eswara Moorthy P."/>
            <person name="Siefert J."/>
            <person name="Uzman A."/>
            <person name="Buzumbo P."/>
            <person name="Verma A."/>
            <person name="Zwiya H."/>
            <person name="McWilliams B.D."/>
            <person name="Olowu A."/>
            <person name="Clinkenbeard K.D."/>
            <person name="Newcombe D."/>
            <person name="Golebiewski L."/>
            <person name="Petrosino J.F."/>
            <person name="Nicholson W.L."/>
            <person name="Fox G.E."/>
            <person name="Venkateswaran K."/>
            <person name="Highlander S.K."/>
            <person name="Weinstock G.M."/>
        </authorList>
    </citation>
    <scope>NUCLEOTIDE SEQUENCE [LARGE SCALE GENOMIC DNA]</scope>
    <source>
        <strain>SAFR-032</strain>
    </source>
</reference>